<organism>
    <name type="scientific">Monkeypox virus</name>
    <dbReference type="NCBI Taxonomy" id="10244"/>
    <lineage>
        <taxon>Viruses</taxon>
        <taxon>Varidnaviria</taxon>
        <taxon>Bamfordvirae</taxon>
        <taxon>Nucleocytoviricota</taxon>
        <taxon>Pokkesviricetes</taxon>
        <taxon>Chitovirales</taxon>
        <taxon>Poxviridae</taxon>
        <taxon>Chordopoxvirinae</taxon>
        <taxon>Orthopoxvirus</taxon>
    </lineage>
</organism>
<proteinExistence type="inferred from homology"/>
<feature type="chain" id="PRO_0000457188" description="Host range factor p28">
    <location>
        <begin position="1"/>
        <end position="242"/>
    </location>
</feature>
<feature type="domain" description="KilA-N" evidence="4">
    <location>
        <begin position="21"/>
        <end position="131"/>
    </location>
</feature>
<feature type="zinc finger region" description="RING-type" evidence="3">
    <location>
        <begin position="173"/>
        <end position="226"/>
    </location>
</feature>
<gene>
    <name type="primary">OPG021</name>
    <name type="ORF">MPXVgp008</name>
</gene>
<comment type="function">
    <text evidence="2">RING-finger E3 ubiquitin ligase which catalyzes the formation of both 'Lys-48'- and 'Lys-63'-linked polyubiquitin chains. Plays an important role in virulence by acting as an anti-apoptotic factor.</text>
</comment>
<comment type="catalytic activity">
    <reaction evidence="2">
        <text>S-ubiquitinyl-[E2 ubiquitin-conjugating enzyme]-L-cysteine + [acceptor protein]-L-lysine = [E2 ubiquitin-conjugating enzyme]-L-cysteine + N(6)-ubiquitinyl-[acceptor protein]-L-lysine.</text>
        <dbReference type="EC" id="2.3.2.27"/>
    </reaction>
</comment>
<comment type="subcellular location">
    <subcellularLocation>
        <location evidence="2">Host cytoplasm</location>
    </subcellularLocation>
    <text evidence="2">Localizes to viral factories, the sites of virus replication.</text>
</comment>
<comment type="domain">
    <text evidence="1">The RING-type zinc finger domain is required for E3 ligase activity.</text>
</comment>
<comment type="similarity">
    <text evidence="5">Belongs to the orthopoxvirus OPG021 family.</text>
</comment>
<protein>
    <recommendedName>
        <fullName>Host range factor p28</fullName>
        <ecNumber>2.3.2.27</ecNumber>
    </recommendedName>
    <alternativeName>
        <fullName>E3 ubiquitin-protein ligase p28</fullName>
    </alternativeName>
</protein>
<dbReference type="EC" id="2.3.2.27"/>
<dbReference type="EMBL" id="MT903340">
    <property type="protein sequence ID" value="QNP12880.1"/>
    <property type="molecule type" value="Genomic_DNA"/>
</dbReference>
<dbReference type="RefSeq" id="YP_010377007.1">
    <property type="nucleotide sequence ID" value="NC_063383.1"/>
</dbReference>
<dbReference type="GeneID" id="72551422"/>
<dbReference type="Proteomes" id="UP000516359">
    <property type="component" value="Genome"/>
</dbReference>
<dbReference type="GO" id="GO:0030430">
    <property type="term" value="C:host cell cytoplasm"/>
    <property type="evidence" value="ECO:0007669"/>
    <property type="project" value="UniProtKB-SubCell"/>
</dbReference>
<dbReference type="GO" id="GO:0016881">
    <property type="term" value="F:acid-amino acid ligase activity"/>
    <property type="evidence" value="ECO:0007669"/>
    <property type="project" value="InterPro"/>
</dbReference>
<dbReference type="GO" id="GO:0061630">
    <property type="term" value="F:ubiquitin protein ligase activity"/>
    <property type="evidence" value="ECO:0007669"/>
    <property type="project" value="InterPro"/>
</dbReference>
<dbReference type="GO" id="GO:0008270">
    <property type="term" value="F:zinc ion binding"/>
    <property type="evidence" value="ECO:0007669"/>
    <property type="project" value="UniProtKB-KW"/>
</dbReference>
<dbReference type="GO" id="GO:0000209">
    <property type="term" value="P:protein polyubiquitination"/>
    <property type="evidence" value="ECO:0007669"/>
    <property type="project" value="InterPro"/>
</dbReference>
<dbReference type="GO" id="GO:0052150">
    <property type="term" value="P:symbiont-mediated perturbation of host apoptosis"/>
    <property type="evidence" value="ECO:0007669"/>
    <property type="project" value="UniProtKB-KW"/>
</dbReference>
<dbReference type="GO" id="GO:0039648">
    <property type="term" value="P:symbiont-mediated perturbation of host ubiquitin-like protein modification"/>
    <property type="evidence" value="ECO:0007669"/>
    <property type="project" value="UniProtKB-KW"/>
</dbReference>
<dbReference type="Gene3D" id="3.30.40.10">
    <property type="entry name" value="Zinc/RING finger domain, C3HC4 (zinc finger)"/>
    <property type="match status" value="1"/>
</dbReference>
<dbReference type="InterPro" id="IPR016398">
    <property type="entry name" value="E3_ubiquitin-prot_ligase_p28"/>
</dbReference>
<dbReference type="InterPro" id="IPR018004">
    <property type="entry name" value="KilA/APSES_HTH"/>
</dbReference>
<dbReference type="InterPro" id="IPR017880">
    <property type="entry name" value="KilA_N"/>
</dbReference>
<dbReference type="InterPro" id="IPR045072">
    <property type="entry name" value="MKRN-like"/>
</dbReference>
<dbReference type="InterPro" id="IPR001841">
    <property type="entry name" value="Znf_RING"/>
</dbReference>
<dbReference type="InterPro" id="IPR013083">
    <property type="entry name" value="Znf_RING/FYVE/PHD"/>
</dbReference>
<dbReference type="InterPro" id="IPR017907">
    <property type="entry name" value="Znf_RING_CS"/>
</dbReference>
<dbReference type="PANTHER" id="PTHR11224:SF10">
    <property type="entry name" value="IP09428P-RELATED"/>
    <property type="match status" value="1"/>
</dbReference>
<dbReference type="PANTHER" id="PTHR11224">
    <property type="entry name" value="MAKORIN-RELATED"/>
    <property type="match status" value="1"/>
</dbReference>
<dbReference type="Pfam" id="PF04383">
    <property type="entry name" value="KilA-N"/>
    <property type="match status" value="1"/>
</dbReference>
<dbReference type="Pfam" id="PF13639">
    <property type="entry name" value="zf-RING_2"/>
    <property type="match status" value="1"/>
</dbReference>
<dbReference type="PIRSF" id="PIRSF003775">
    <property type="entry name" value="E3_ubiquit_lig_p28"/>
    <property type="match status" value="1"/>
</dbReference>
<dbReference type="SMART" id="SM00184">
    <property type="entry name" value="RING"/>
    <property type="match status" value="1"/>
</dbReference>
<dbReference type="SUPFAM" id="SSF57850">
    <property type="entry name" value="RING/U-box"/>
    <property type="match status" value="1"/>
</dbReference>
<dbReference type="PROSITE" id="PS51301">
    <property type="entry name" value="KILA_N"/>
    <property type="match status" value="1"/>
</dbReference>
<dbReference type="PROSITE" id="PS00518">
    <property type="entry name" value="ZF_RING_1"/>
    <property type="match status" value="1"/>
</dbReference>
<dbReference type="PROSITE" id="PS50089">
    <property type="entry name" value="ZF_RING_2"/>
    <property type="match status" value="1"/>
</dbReference>
<name>PG021_MONPV</name>
<reference key="1">
    <citation type="journal article" date="2022" name="J. Infect. Dis.">
        <title>Exportation of Monkeypox virus from the African continent.</title>
        <authorList>
            <person name="Mauldin M.R."/>
            <person name="McCollum A.M."/>
            <person name="Nakazawa Y.J."/>
            <person name="Mandra A."/>
            <person name="Whitehouse E.R."/>
            <person name="Davidson W."/>
            <person name="Zhao H."/>
            <person name="Gao J."/>
            <person name="Li Y."/>
            <person name="Doty J."/>
            <person name="Yinka-Ogunleye A."/>
            <person name="Akinpelu A."/>
            <person name="Aruna O."/>
            <person name="Naidoo D."/>
            <person name="Lewandowski K."/>
            <person name="Afrough B."/>
            <person name="Graham V."/>
            <person name="Aarons E."/>
            <person name="Hewson R."/>
            <person name="Vipond R."/>
            <person name="Dunning J."/>
            <person name="Chand M."/>
            <person name="Brown C."/>
            <person name="Cohen-Gihon I."/>
            <person name="Erez N."/>
            <person name="Shifman O."/>
            <person name="Israeli O."/>
            <person name="Sharon M."/>
            <person name="Schwartz E."/>
            <person name="Beth-Din A."/>
            <person name="Zvi A."/>
            <person name="Mak T.M."/>
            <person name="Ng Y.K."/>
            <person name="Cui L."/>
            <person name="Lin R.T.P."/>
            <person name="Olson V.A."/>
            <person name="Brooks T."/>
            <person name="Paran N."/>
            <person name="Ihekweazu C."/>
            <person name="Reynolds M.G."/>
        </authorList>
    </citation>
    <scope>NUCLEOTIDE SEQUENCE [LARGE SCALE GENOMIC DNA]</scope>
    <source>
        <strain>MPXV-M5312_HM12_Rivers</strain>
    </source>
</reference>
<sequence>MEFDPVKINTSSIDHVTILQYIDEPNDIRLTVCIIRNVNNITYYINITKINPHLANRFRAWKKRIAGRDYMTNLSRDTGIQQSKLTETIRNCQKNKNIYGLYIHYNLVINVVIDWITDVIVQSILRGLVNWYIANNTYTPNTPNNTTTISELDIIKILDKYEDMYRVSKEKECGICYEVVYSKRLENDRYFGLLDSCNHIFCITCINIWHRTRRETGASDNCPICRTRFKKITMSKFYKLVN</sequence>
<keyword id="KW-1035">Host cytoplasm</keyword>
<keyword id="KW-0945">Host-virus interaction</keyword>
<keyword id="KW-0479">Metal-binding</keyword>
<keyword id="KW-1119">Modulation of host cell apoptosis by virus</keyword>
<keyword id="KW-1128">Modulation of host ubiquitin pathway by viral E3 ligase</keyword>
<keyword id="KW-1130">Modulation of host ubiquitin pathway by virus</keyword>
<keyword id="KW-1185">Reference proteome</keyword>
<keyword id="KW-0808">Transferase</keyword>
<keyword id="KW-0833">Ubl conjugation pathway</keyword>
<keyword id="KW-0862">Zinc</keyword>
<keyword id="KW-0863">Zinc-finger</keyword>
<evidence type="ECO:0000250" key="1"/>
<evidence type="ECO:0000250" key="2">
    <source>
        <dbReference type="UniProtKB" id="Q85318"/>
    </source>
</evidence>
<evidence type="ECO:0000255" key="3">
    <source>
        <dbReference type="PROSITE-ProRule" id="PRU00175"/>
    </source>
</evidence>
<evidence type="ECO:0000255" key="4">
    <source>
        <dbReference type="PROSITE-ProRule" id="PRU00631"/>
    </source>
</evidence>
<evidence type="ECO:0000305" key="5"/>
<organismHost>
    <name type="scientific">Cynomys gunnisoni</name>
    <name type="common">Gunnison's prairie dog</name>
    <name type="synonym">Spermophilus gunnisoni</name>
    <dbReference type="NCBI Taxonomy" id="45479"/>
</organismHost>
<organismHost>
    <name type="scientific">Cynomys leucurus</name>
    <name type="common">White-tailed prairie dog</name>
    <dbReference type="NCBI Taxonomy" id="99825"/>
</organismHost>
<organismHost>
    <name type="scientific">Cynomys ludovicianus</name>
    <name type="common">Black-tailed prairie dog</name>
    <dbReference type="NCBI Taxonomy" id="45480"/>
</organismHost>
<organismHost>
    <name type="scientific">Cynomys mexicanus</name>
    <name type="common">Mexican prairie dog</name>
    <dbReference type="NCBI Taxonomy" id="99826"/>
</organismHost>
<organismHost>
    <name type="scientific">Cynomys parvidens</name>
    <name type="common">Utah prairie dog</name>
    <dbReference type="NCBI Taxonomy" id="99827"/>
</organismHost>
<organismHost>
    <name type="scientific">Gliridae</name>
    <name type="common">dormice</name>
    <dbReference type="NCBI Taxonomy" id="30650"/>
</organismHost>
<organismHost>
    <name type="scientific">Heliosciurus ruwenzorii</name>
    <name type="common">Ruwenzori sun squirrel</name>
    <dbReference type="NCBI Taxonomy" id="226685"/>
</organismHost>
<organismHost>
    <name type="scientific">Homo sapiens</name>
    <name type="common">Human</name>
    <dbReference type="NCBI Taxonomy" id="9606"/>
</organismHost>
<organismHost>
    <name type="scientific">Mus musculus</name>
    <name type="common">Mouse</name>
    <dbReference type="NCBI Taxonomy" id="10090"/>
</organismHost>
<accession>A0A7H0DMZ7</accession>